<keyword id="KW-0167">Capsid protein</keyword>
<keyword id="KW-0325">Glycoprotein</keyword>
<keyword id="KW-0449">Lipoprotein</keyword>
<keyword id="KW-0519">Myristate</keyword>
<keyword id="KW-1152">Outer capsid protein</keyword>
<keyword id="KW-1185">Reference proteome</keyword>
<keyword id="KW-1146">T=13 icosahedral capsid protein</keyword>
<keyword id="KW-1162">Viral penetration into host cytoplasm</keyword>
<keyword id="KW-1173">Viral penetration via permeabilization of host membrane</keyword>
<keyword id="KW-0946">Virion</keyword>
<keyword id="KW-1160">Virus entry into host cell</keyword>
<accession>B2BNE4</accession>
<sequence>MGNVQTSTNVYNIDGNGNTFAPSSQMASTASPAIDLKPGVLNPTGKLWQTMGTGAPSADSLVLVVDNKGEYTYLSENMRETLNKAVTDVNMWQPLFQATKSGCGPVVLANFTTISTGYVGATADDAFSNGLVSNGPFLATMHIMELQKTIAARMRDVAIWQKHLDTAMTLMTPDVSAGDVTCKWRSLLEFAQDILPLDNLCRSYPNEFYTVAAQRYPAIRPGQPDTQVALPQPHPLGEVAGSFNAPTSEVGSLVGAGAALSDAISTLASKDLDLVEADTPLPVSVFTPSLAPRTYRPAFIDPQDAAWIAQWNGDANIRIITTYQSTDYTVQLGPGPTRVIDMNAMIDAKLTLDVSGTILPFQENNDLSSAIPAFVLIQTKVPLHSVTQASDVEGITVVSAAESSAINLSVNVRGDPRFDMLHLHAMFERETIAGIPYIYGIGTFLIPSITSSSSFCNPTLMDGELTVTPLLLRETTYKGAVVDTVTPSEVMANQTSEEVASALANDAVLLVSGQLERLATVVGDVIPIASGEDDAATSAIVGRLAIEATMRARHGGDTRALPNFGQLWKRAKRAASMFASNPALALQVGVPVLADSGILSALTSGVSTAIRTGSLGKGVSDASSKLNARQSLTLARKTFFKKVEELWPSQ</sequence>
<comment type="function">
    <text evidence="4">Interacts with VP7 to form the outer icosahedral capsid with an incomplete T=13 symmetry, about 80 nm in diameter, and consisting of 200 VP4-VP7 trimers. Myristoylated N-terminal peptide may be released in the endosome and involved in permeabilization and delivery of transcriptionally active viral particles into the host cell cytoplasm (Potential).</text>
</comment>
<comment type="subunit">
    <text evidence="3">Interacts with VP6 and VP7.</text>
</comment>
<comment type="subcellular location">
    <subcellularLocation>
        <location evidence="4">Virion</location>
    </subcellularLocation>
</comment>
<comment type="PTM">
    <text evidence="1">Cleaved during the endosomal proteolytic disassembly of the outer capsid.</text>
</comment>
<comment type="PTM">
    <text evidence="1">N-terminally myristoylated. This acylation is essential for the membrane fusion activity (By similarity).</text>
</comment>
<comment type="similarity">
    <text evidence="4">Belongs to the aquareoviridae outer capsid VP4 protein family.</text>
</comment>
<feature type="initiator methionine" description="Removed" evidence="1">
    <location>
        <position position="1"/>
    </location>
</feature>
<feature type="chain" id="PRO_0000404188" description="Outer capsid protein VP4">
    <location>
        <begin position="2"/>
        <end position="650"/>
    </location>
</feature>
<feature type="site" description="Cleavage" evidence="1">
    <location>
        <begin position="42"/>
        <end position="43"/>
    </location>
</feature>
<feature type="lipid moiety-binding region" description="N-myristoyl glycine; by host" evidence="1">
    <location>
        <position position="2"/>
    </location>
</feature>
<feature type="glycosylation site" description="N-linked (GlcNAc...) asparagine; by host" evidence="2">
    <location>
        <position position="110"/>
    </location>
</feature>
<feature type="glycosylation site" description="N-linked (GlcNAc...) asparagine; by host" evidence="2">
    <location>
        <position position="407"/>
    </location>
</feature>
<feature type="glycosylation site" description="N-linked (GlcNAc...) asparagine; by host" evidence="2">
    <location>
        <position position="493"/>
    </location>
</feature>
<evidence type="ECO:0000250" key="1"/>
<evidence type="ECO:0000255" key="2"/>
<evidence type="ECO:0000269" key="3">
    <source>
    </source>
</evidence>
<evidence type="ECO:0000305" key="4"/>
<name>VP4_AQRVG</name>
<organismHost>
    <name type="scientific">Ctenopharyngodon idella</name>
    <name type="common">Grass carp</name>
    <name type="synonym">Leuciscus idella</name>
    <dbReference type="NCBI Taxonomy" id="7959"/>
</organismHost>
<protein>
    <recommendedName>
        <fullName>Outer capsid protein VP4</fullName>
    </recommendedName>
</protein>
<proteinExistence type="evidence at protein level"/>
<reference key="1">
    <citation type="journal article" date="2008" name="Virology">
        <title>Complete characterisation of the American grass carp reovirus genome (genus Aquareovirus: family Reoviridae) reveals an evolutionary link between aquareoviruses and coltiviruses.</title>
        <authorList>
            <person name="Mohd Jaafar F."/>
            <person name="Goodwin A.E."/>
            <person name="Belhouchet M."/>
            <person name="Merry G."/>
            <person name="Fang Q."/>
            <person name="Cantaloube J.F."/>
            <person name="Biagini P."/>
            <person name="de Micco P."/>
            <person name="Mertens P.P."/>
            <person name="Attoui H."/>
        </authorList>
    </citation>
    <scope>NUCLEOTIDE SEQUENCE [GENOMIC RNA]</scope>
</reference>
<reference key="2">
    <citation type="journal article" date="2008" name="J. Mol. Biol.">
        <title>Subnanometer-resolution structures of the grass carp reovirus core and virion.</title>
        <authorList>
            <person name="Cheng L."/>
            <person name="Fang Q."/>
            <person name="Shah S."/>
            <person name="Atanasov I.C."/>
            <person name="Zhou Z.H."/>
        </authorList>
    </citation>
    <scope>FUNCTION</scope>
    <scope>INTERACTION WITH VP6 AND VP7</scope>
    <source>
        <strain>GCRV</strain>
    </source>
</reference>
<gene>
    <name type="primary">S6</name>
</gene>
<organism>
    <name type="scientific">Aquareovirus G (isolate American grass carp/USA/PB01-155/-)</name>
    <name type="common">AQRV-G</name>
    <dbReference type="NCBI Taxonomy" id="648234"/>
    <lineage>
        <taxon>Viruses</taxon>
        <taxon>Riboviria</taxon>
        <taxon>Orthornavirae</taxon>
        <taxon>Duplornaviricota</taxon>
        <taxon>Resentoviricetes</taxon>
        <taxon>Reovirales</taxon>
        <taxon>Spinareoviridae</taxon>
        <taxon>Aquareovirus</taxon>
        <taxon>Aquareovirus graminis</taxon>
    </lineage>
</organism>
<dbReference type="EMBL" id="EF589103">
    <property type="protein sequence ID" value="ABV01044.1"/>
    <property type="molecule type" value="Genomic_RNA"/>
</dbReference>
<dbReference type="RefSeq" id="YP_001837099.1">
    <property type="nucleotide sequence ID" value="NC_010589.1"/>
</dbReference>
<dbReference type="SMR" id="B2BNE4"/>
<dbReference type="MEROPS" id="N07.002"/>
<dbReference type="GlyCosmos" id="B2BNE4">
    <property type="glycosylation" value="3 sites, No reported glycans"/>
</dbReference>
<dbReference type="KEGG" id="vg:6218804"/>
<dbReference type="Proteomes" id="UP000001674">
    <property type="component" value="Genome"/>
</dbReference>
<dbReference type="GO" id="GO:0039621">
    <property type="term" value="C:T=13 icosahedral viral capsid"/>
    <property type="evidence" value="ECO:0007669"/>
    <property type="project" value="UniProtKB-KW"/>
</dbReference>
<dbReference type="GO" id="GO:0039624">
    <property type="term" value="C:viral outer capsid"/>
    <property type="evidence" value="ECO:0007669"/>
    <property type="project" value="UniProtKB-KW"/>
</dbReference>
<dbReference type="GO" id="GO:0046812">
    <property type="term" value="F:host cell surface binding"/>
    <property type="evidence" value="ECO:0007669"/>
    <property type="project" value="InterPro"/>
</dbReference>
<dbReference type="GO" id="GO:0140267">
    <property type="term" value="P:symbiont entry into host cell via permeabilization of host membrane"/>
    <property type="evidence" value="ECO:0007669"/>
    <property type="project" value="UniProtKB-KW"/>
</dbReference>
<dbReference type="Gene3D" id="2.60.120.420">
    <property type="entry name" value="Membrane penetration protein mu1, Chain B, domain 4"/>
    <property type="match status" value="1"/>
</dbReference>
<dbReference type="Gene3D" id="1.10.2040.10">
    <property type="entry name" value="Protein mu-1, chain B, domain 2"/>
    <property type="match status" value="1"/>
</dbReference>
<dbReference type="Gene3D" id="1.10.2050.10">
    <property type="entry name" value="Protein mu-1, chain B, domain 3"/>
    <property type="match status" value="1"/>
</dbReference>
<dbReference type="InterPro" id="IPR009113">
    <property type="entry name" value="Mu1/VP4"/>
</dbReference>
<dbReference type="InterPro" id="IPR036256">
    <property type="entry name" value="Mu1/VP4_sf"/>
</dbReference>
<dbReference type="InterPro" id="IPR015962">
    <property type="entry name" value="Mu1_membr_pen_domII"/>
</dbReference>
<dbReference type="InterPro" id="IPR044937">
    <property type="entry name" value="Mu1_membr_pen_domIII"/>
</dbReference>
<dbReference type="InterPro" id="IPR015960">
    <property type="entry name" value="Mu1_membr_pen_domIV"/>
</dbReference>
<dbReference type="Pfam" id="PF05993">
    <property type="entry name" value="Reovirus_M2"/>
    <property type="match status" value="1"/>
</dbReference>
<dbReference type="SUPFAM" id="SSF69908">
    <property type="entry name" value="Membrane penetration protein mu1"/>
    <property type="match status" value="1"/>
</dbReference>